<keyword id="KW-0067">ATP-binding</keyword>
<keyword id="KW-0325">Glycoprotein</keyword>
<keyword id="KW-0472">Membrane</keyword>
<keyword id="KW-0547">Nucleotide-binding</keyword>
<keyword id="KW-0675">Receptor</keyword>
<keyword id="KW-1185">Reference proteome</keyword>
<keyword id="KW-0732">Signal</keyword>
<keyword id="KW-0812">Transmembrane</keyword>
<keyword id="KW-1133">Transmembrane helix</keyword>
<sequence>MECGSHSGHRPIPIWLSSCLVAMCLGLPLGAAVPQEAPAYYYVGCYTARTDLLHESVYAKTPQTCIEICEHQGHHYAVLASEKCFCANVLEPQEQQDEQLCNTRCLANKAQYCGGVGVHSYYSTILTKQPGPHHLRISNKTENSLTLSWNAYEARKLLLAGGAEAVLPNQLLDNFLIKAQVLKTYSSLPAFPQPEFMVQSTETQFELTDLHPATLYNISVRAMCKDAQVGQSECGQASIEATTEVGLPSPVPAQPKILSRTDRTVTIELSPIRNDNGPLSKLLVIVEYVDNALSQPFDAQLLGSWQQAQQDGVPYYIAAELDYDRPEDNRTRRFVVGDGKRYGRFTNKPLDQPDAHVHISLGLVSTLEGVTKTMYSRGTHDQHVTSLDDFSYATFEKGQSSVVALAVTCVIFGSCLLLSLIAYFYLRYKTCRGRRLTGGNTHEMTLQTPIIERENNGYLVEDDPLPHSPENFKQQLQQLVEGYERIPRNALRLNVNDVIGDGRFGEIITGKVSTNDFARDCTLHVLCLDDLNGTTQAQLLRELRQLSQLKRQEHLLDFYGVSASPDWFYLIFEQQRMSLKRKLVESRLMAPSPRLTSLSEQLVLQWIYELASAMNYLSSCQVVHRQLCSHSVFVTSDFKLKLSVFGPLPYMNIARQQPDHNRWLAPEVLRHQHHHSTRSDVWSLACVAWECCALGGTPYANAVASNQQLLEAIRAAVRPAQPAYVYGDLYQLLLNCWQLEPSERSSCEDVAFGVRQLMTSPRHALSFDRVAGGLDTLPPYLPQLEAVATMG</sequence>
<gene>
    <name evidence="6" type="primary">Wsck</name>
    <name evidence="6" type="ORF">CG31127</name>
</gene>
<accession>P83097</accession>
<accession>Q8I0H1</accession>
<accession>Q95TS7</accession>
<comment type="function">
    <text evidence="5">Probably lacks tyrosine-protein kinase activity.</text>
</comment>
<comment type="subcellular location">
    <subcellularLocation>
        <location evidence="5">Membrane</location>
        <topology evidence="5">Single-pass type I membrane protein</topology>
    </subcellularLocation>
</comment>
<comment type="domain">
    <text evidence="2">The protein kinase domain is predicted to be catalytically inactive.</text>
</comment>
<comment type="similarity">
    <text evidence="2">Belongs to the protein kinase superfamily. Tyr protein kinase family.</text>
</comment>
<comment type="caution">
    <text evidence="5">Gln-626 is present instead of the conserved Asp which is expected to act as an active site proton acceptor therefore suggesting that it has no protein kinase activity.</text>
</comment>
<comment type="sequence caution" evidence="5">
    <conflict type="erroneous initiation">
        <sequence resource="EMBL-CDS" id="AAL13797"/>
    </conflict>
</comment>
<evidence type="ECO:0000255" key="1"/>
<evidence type="ECO:0000255" key="2">
    <source>
        <dbReference type="PROSITE-ProRule" id="PRU00159"/>
    </source>
</evidence>
<evidence type="ECO:0000255" key="3">
    <source>
        <dbReference type="PROSITE-ProRule" id="PRU00316"/>
    </source>
</evidence>
<evidence type="ECO:0000255" key="4">
    <source>
        <dbReference type="PROSITE-ProRule" id="PRU00558"/>
    </source>
</evidence>
<evidence type="ECO:0000305" key="5"/>
<evidence type="ECO:0000312" key="6">
    <source>
        <dbReference type="FlyBase" id="FBgn0046685"/>
    </source>
</evidence>
<protein>
    <recommendedName>
        <fullName evidence="5">Putative inactive tyrosine-protein kinase Wsck</fullName>
    </recommendedName>
</protein>
<organism>
    <name type="scientific">Drosophila melanogaster</name>
    <name type="common">Fruit fly</name>
    <dbReference type="NCBI Taxonomy" id="7227"/>
    <lineage>
        <taxon>Eukaryota</taxon>
        <taxon>Metazoa</taxon>
        <taxon>Ecdysozoa</taxon>
        <taxon>Arthropoda</taxon>
        <taxon>Hexapoda</taxon>
        <taxon>Insecta</taxon>
        <taxon>Pterygota</taxon>
        <taxon>Neoptera</taxon>
        <taxon>Endopterygota</taxon>
        <taxon>Diptera</taxon>
        <taxon>Brachycera</taxon>
        <taxon>Muscomorpha</taxon>
        <taxon>Ephydroidea</taxon>
        <taxon>Drosophilidae</taxon>
        <taxon>Drosophila</taxon>
        <taxon>Sophophora</taxon>
    </lineage>
</organism>
<dbReference type="EMBL" id="AE014297">
    <property type="protein sequence ID" value="AAN14006.1"/>
    <property type="molecule type" value="Genomic_DNA"/>
</dbReference>
<dbReference type="EMBL" id="AY058568">
    <property type="protein sequence ID" value="AAL13797.1"/>
    <property type="status" value="ALT_INIT"/>
    <property type="molecule type" value="mRNA"/>
</dbReference>
<dbReference type="EMBL" id="BT001869">
    <property type="protein sequence ID" value="AAN71639.1"/>
    <property type="molecule type" value="mRNA"/>
</dbReference>
<dbReference type="RefSeq" id="NP_733018.1">
    <property type="nucleotide sequence ID" value="NM_170155.2"/>
</dbReference>
<dbReference type="SMR" id="P83097"/>
<dbReference type="STRING" id="7227.FBpp0084049"/>
<dbReference type="GlyCosmos" id="P83097">
    <property type="glycosylation" value="3 sites, No reported glycans"/>
</dbReference>
<dbReference type="GlyGen" id="P83097">
    <property type="glycosylation" value="3 sites"/>
</dbReference>
<dbReference type="PaxDb" id="7227-FBpp0084049"/>
<dbReference type="DNASU" id="318600"/>
<dbReference type="EnsemblMetazoa" id="FBtr0084669">
    <property type="protein sequence ID" value="FBpp0084049"/>
    <property type="gene ID" value="FBgn0046685"/>
</dbReference>
<dbReference type="GeneID" id="318600"/>
<dbReference type="KEGG" id="dme:Dmel_CG31127"/>
<dbReference type="UCSC" id="CG31127-RA">
    <property type="organism name" value="d. melanogaster"/>
</dbReference>
<dbReference type="AGR" id="FB:FBgn0046685"/>
<dbReference type="CTD" id="318600"/>
<dbReference type="FlyBase" id="FBgn0046685">
    <property type="gene designation" value="Wsck"/>
</dbReference>
<dbReference type="VEuPathDB" id="VectorBase:FBgn0046685"/>
<dbReference type="eggNOG" id="KOG0200">
    <property type="taxonomic scope" value="Eukaryota"/>
</dbReference>
<dbReference type="eggNOG" id="KOG4228">
    <property type="taxonomic scope" value="Eukaryota"/>
</dbReference>
<dbReference type="HOGENOM" id="CLU_021662_0_0_1"/>
<dbReference type="InParanoid" id="P83097"/>
<dbReference type="OMA" id="WIYELAS"/>
<dbReference type="OrthoDB" id="9943809at2759"/>
<dbReference type="PhylomeDB" id="P83097"/>
<dbReference type="Reactome" id="R-DME-114604">
    <property type="pathway name" value="GPVI-mediated activation cascade"/>
</dbReference>
<dbReference type="Reactome" id="R-DME-354192">
    <property type="pathway name" value="Integrin signaling"/>
</dbReference>
<dbReference type="Reactome" id="R-DME-5621480">
    <property type="pathway name" value="Dectin-2 family"/>
</dbReference>
<dbReference type="Reactome" id="R-DME-9013407">
    <property type="pathway name" value="RHOH GTPase cycle"/>
</dbReference>
<dbReference type="Reactome" id="R-DME-912631">
    <property type="pathway name" value="Regulation of signaling by CBL"/>
</dbReference>
<dbReference type="Reactome" id="R-DME-9674555">
    <property type="pathway name" value="Signaling by CSF3 (G-CSF)"/>
</dbReference>
<dbReference type="Reactome" id="R-DME-9705462">
    <property type="pathway name" value="Inactivation of CSF3 (G-CSF) signaling"/>
</dbReference>
<dbReference type="BioGRID-ORCS" id="318600">
    <property type="hits" value="0 hits in 3 CRISPR screens"/>
</dbReference>
<dbReference type="GenomeRNAi" id="318600"/>
<dbReference type="PRO" id="PR:P83097"/>
<dbReference type="Proteomes" id="UP000000803">
    <property type="component" value="Chromosome 3R"/>
</dbReference>
<dbReference type="Bgee" id="FBgn0046685">
    <property type="expression patterns" value="Expressed in embryonic/larval hemocyte (Drosophila) and 55 other cell types or tissues"/>
</dbReference>
<dbReference type="ExpressionAtlas" id="P83097">
    <property type="expression patterns" value="baseline and differential"/>
</dbReference>
<dbReference type="GO" id="GO:0005886">
    <property type="term" value="C:plasma membrane"/>
    <property type="evidence" value="ECO:0000318"/>
    <property type="project" value="GO_Central"/>
</dbReference>
<dbReference type="GO" id="GO:0005524">
    <property type="term" value="F:ATP binding"/>
    <property type="evidence" value="ECO:0007669"/>
    <property type="project" value="UniProtKB-KW"/>
</dbReference>
<dbReference type="GO" id="GO:0009653">
    <property type="term" value="P:anatomical structure morphogenesis"/>
    <property type="evidence" value="ECO:0007669"/>
    <property type="project" value="UniProtKB-ARBA"/>
</dbReference>
<dbReference type="GO" id="GO:0022008">
    <property type="term" value="P:neurogenesis"/>
    <property type="evidence" value="ECO:0007669"/>
    <property type="project" value="UniProtKB-ARBA"/>
</dbReference>
<dbReference type="CDD" id="cd00192">
    <property type="entry name" value="PTKc"/>
    <property type="match status" value="1"/>
</dbReference>
<dbReference type="FunFam" id="1.10.510.10:FF:001681">
    <property type="entry name" value="Putative tyrosine-protein kinase Wsck"/>
    <property type="match status" value="1"/>
</dbReference>
<dbReference type="Gene3D" id="2.60.40.10">
    <property type="entry name" value="Immunoglobulins"/>
    <property type="match status" value="1"/>
</dbReference>
<dbReference type="Gene3D" id="3.30.200.20">
    <property type="entry name" value="Phosphorylase Kinase, domain 1"/>
    <property type="match status" value="1"/>
</dbReference>
<dbReference type="Gene3D" id="1.10.510.10">
    <property type="entry name" value="Transferase(Phosphotransferase) domain 1"/>
    <property type="match status" value="1"/>
</dbReference>
<dbReference type="InterPro" id="IPR003961">
    <property type="entry name" value="FN3_dom"/>
</dbReference>
<dbReference type="InterPro" id="IPR036116">
    <property type="entry name" value="FN3_sf"/>
</dbReference>
<dbReference type="InterPro" id="IPR013783">
    <property type="entry name" value="Ig-like_fold"/>
</dbReference>
<dbReference type="InterPro" id="IPR011009">
    <property type="entry name" value="Kinase-like_dom_sf"/>
</dbReference>
<dbReference type="InterPro" id="IPR000719">
    <property type="entry name" value="Prot_kinase_dom"/>
</dbReference>
<dbReference type="InterPro" id="IPR050122">
    <property type="entry name" value="RTK"/>
</dbReference>
<dbReference type="InterPro" id="IPR001245">
    <property type="entry name" value="Ser-Thr/Tyr_kinase_cat_dom"/>
</dbReference>
<dbReference type="InterPro" id="IPR002889">
    <property type="entry name" value="WSC_carb-bd"/>
</dbReference>
<dbReference type="PANTHER" id="PTHR24416:SF550">
    <property type="entry name" value="FIBROBLAST GROWTH FACTOR RECEPTOR HOMOLOG 1-RELATED"/>
    <property type="match status" value="1"/>
</dbReference>
<dbReference type="PANTHER" id="PTHR24416">
    <property type="entry name" value="TYROSINE-PROTEIN KINASE RECEPTOR"/>
    <property type="match status" value="1"/>
</dbReference>
<dbReference type="Pfam" id="PF23144">
    <property type="entry name" value="Fn3_PTPRU"/>
    <property type="match status" value="1"/>
</dbReference>
<dbReference type="Pfam" id="PF07714">
    <property type="entry name" value="PK_Tyr_Ser-Thr"/>
    <property type="match status" value="1"/>
</dbReference>
<dbReference type="Pfam" id="PF01822">
    <property type="entry name" value="WSC"/>
    <property type="match status" value="1"/>
</dbReference>
<dbReference type="PRINTS" id="PR00109">
    <property type="entry name" value="TYRKINASE"/>
</dbReference>
<dbReference type="SMART" id="SM00060">
    <property type="entry name" value="FN3"/>
    <property type="match status" value="1"/>
</dbReference>
<dbReference type="SMART" id="SM00321">
    <property type="entry name" value="WSC"/>
    <property type="match status" value="1"/>
</dbReference>
<dbReference type="SUPFAM" id="SSF49265">
    <property type="entry name" value="Fibronectin type III"/>
    <property type="match status" value="1"/>
</dbReference>
<dbReference type="SUPFAM" id="SSF56112">
    <property type="entry name" value="Protein kinase-like (PK-like)"/>
    <property type="match status" value="1"/>
</dbReference>
<dbReference type="PROSITE" id="PS50853">
    <property type="entry name" value="FN3"/>
    <property type="match status" value="1"/>
</dbReference>
<dbReference type="PROSITE" id="PS50011">
    <property type="entry name" value="PROTEIN_KINASE_DOM"/>
    <property type="match status" value="1"/>
</dbReference>
<dbReference type="PROSITE" id="PS51212">
    <property type="entry name" value="WSC"/>
    <property type="match status" value="1"/>
</dbReference>
<feature type="signal peptide" evidence="1">
    <location>
        <begin position="1"/>
        <end position="26"/>
    </location>
</feature>
<feature type="chain" id="PRO_0000045275" description="Putative inactive tyrosine-protein kinase Wsck">
    <location>
        <begin position="27"/>
        <end position="791"/>
    </location>
</feature>
<feature type="topological domain" description="Extracellular" evidence="1">
    <location>
        <begin position="27"/>
        <end position="401"/>
    </location>
</feature>
<feature type="transmembrane region" description="Helical" evidence="1">
    <location>
        <begin position="402"/>
        <end position="422"/>
    </location>
</feature>
<feature type="topological domain" description="Cytoplasmic" evidence="1">
    <location>
        <begin position="423"/>
        <end position="791"/>
    </location>
</feature>
<feature type="domain" description="WSC" evidence="4">
    <location>
        <begin position="39"/>
        <end position="125"/>
    </location>
</feature>
<feature type="domain" description="Fibronectin type-III" evidence="3">
    <location>
        <begin position="131"/>
        <end position="246"/>
    </location>
</feature>
<feature type="domain" description="Protein kinase" evidence="2">
    <location>
        <begin position="493"/>
        <end position="758"/>
    </location>
</feature>
<feature type="binding site" evidence="2">
    <location>
        <begin position="499"/>
        <end position="507"/>
    </location>
    <ligand>
        <name>ATP</name>
        <dbReference type="ChEBI" id="CHEBI:30616"/>
    </ligand>
</feature>
<feature type="glycosylation site" description="N-linked (GlcNAc...) asparagine" evidence="1">
    <location>
        <position position="139"/>
    </location>
</feature>
<feature type="glycosylation site" description="N-linked (GlcNAc...) asparagine" evidence="1">
    <location>
        <position position="217"/>
    </location>
</feature>
<feature type="glycosylation site" description="N-linked (GlcNAc...) asparagine" evidence="1">
    <location>
        <position position="329"/>
    </location>
</feature>
<reference key="1">
    <citation type="journal article" date="2000" name="Science">
        <title>The genome sequence of Drosophila melanogaster.</title>
        <authorList>
            <person name="Adams M.D."/>
            <person name="Celniker S.E."/>
            <person name="Holt R.A."/>
            <person name="Evans C.A."/>
            <person name="Gocayne J.D."/>
            <person name="Amanatides P.G."/>
            <person name="Scherer S.E."/>
            <person name="Li P.W."/>
            <person name="Hoskins R.A."/>
            <person name="Galle R.F."/>
            <person name="George R.A."/>
            <person name="Lewis S.E."/>
            <person name="Richards S."/>
            <person name="Ashburner M."/>
            <person name="Henderson S.N."/>
            <person name="Sutton G.G."/>
            <person name="Wortman J.R."/>
            <person name="Yandell M.D."/>
            <person name="Zhang Q."/>
            <person name="Chen L.X."/>
            <person name="Brandon R.C."/>
            <person name="Rogers Y.-H.C."/>
            <person name="Blazej R.G."/>
            <person name="Champe M."/>
            <person name="Pfeiffer B.D."/>
            <person name="Wan K.H."/>
            <person name="Doyle C."/>
            <person name="Baxter E.G."/>
            <person name="Helt G."/>
            <person name="Nelson C.R."/>
            <person name="Miklos G.L.G."/>
            <person name="Abril J.F."/>
            <person name="Agbayani A."/>
            <person name="An H.-J."/>
            <person name="Andrews-Pfannkoch C."/>
            <person name="Baldwin D."/>
            <person name="Ballew R.M."/>
            <person name="Basu A."/>
            <person name="Baxendale J."/>
            <person name="Bayraktaroglu L."/>
            <person name="Beasley E.M."/>
            <person name="Beeson K.Y."/>
            <person name="Benos P.V."/>
            <person name="Berman B.P."/>
            <person name="Bhandari D."/>
            <person name="Bolshakov S."/>
            <person name="Borkova D."/>
            <person name="Botchan M.R."/>
            <person name="Bouck J."/>
            <person name="Brokstein P."/>
            <person name="Brottier P."/>
            <person name="Burtis K.C."/>
            <person name="Busam D.A."/>
            <person name="Butler H."/>
            <person name="Cadieu E."/>
            <person name="Center A."/>
            <person name="Chandra I."/>
            <person name="Cherry J.M."/>
            <person name="Cawley S."/>
            <person name="Dahlke C."/>
            <person name="Davenport L.B."/>
            <person name="Davies P."/>
            <person name="de Pablos B."/>
            <person name="Delcher A."/>
            <person name="Deng Z."/>
            <person name="Mays A.D."/>
            <person name="Dew I."/>
            <person name="Dietz S.M."/>
            <person name="Dodson K."/>
            <person name="Doup L.E."/>
            <person name="Downes M."/>
            <person name="Dugan-Rocha S."/>
            <person name="Dunkov B.C."/>
            <person name="Dunn P."/>
            <person name="Durbin K.J."/>
            <person name="Evangelista C.C."/>
            <person name="Ferraz C."/>
            <person name="Ferriera S."/>
            <person name="Fleischmann W."/>
            <person name="Fosler C."/>
            <person name="Gabrielian A.E."/>
            <person name="Garg N.S."/>
            <person name="Gelbart W.M."/>
            <person name="Glasser K."/>
            <person name="Glodek A."/>
            <person name="Gong F."/>
            <person name="Gorrell J.H."/>
            <person name="Gu Z."/>
            <person name="Guan P."/>
            <person name="Harris M."/>
            <person name="Harris N.L."/>
            <person name="Harvey D.A."/>
            <person name="Heiman T.J."/>
            <person name="Hernandez J.R."/>
            <person name="Houck J."/>
            <person name="Hostin D."/>
            <person name="Houston K.A."/>
            <person name="Howland T.J."/>
            <person name="Wei M.-H."/>
            <person name="Ibegwam C."/>
            <person name="Jalali M."/>
            <person name="Kalush F."/>
            <person name="Karpen G.H."/>
            <person name="Ke Z."/>
            <person name="Kennison J.A."/>
            <person name="Ketchum K.A."/>
            <person name="Kimmel B.E."/>
            <person name="Kodira C.D."/>
            <person name="Kraft C.L."/>
            <person name="Kravitz S."/>
            <person name="Kulp D."/>
            <person name="Lai Z."/>
            <person name="Lasko P."/>
            <person name="Lei Y."/>
            <person name="Levitsky A.A."/>
            <person name="Li J.H."/>
            <person name="Li Z."/>
            <person name="Liang Y."/>
            <person name="Lin X."/>
            <person name="Liu X."/>
            <person name="Mattei B."/>
            <person name="McIntosh T.C."/>
            <person name="McLeod M.P."/>
            <person name="McPherson D."/>
            <person name="Merkulov G."/>
            <person name="Milshina N.V."/>
            <person name="Mobarry C."/>
            <person name="Morris J."/>
            <person name="Moshrefi A."/>
            <person name="Mount S.M."/>
            <person name="Moy M."/>
            <person name="Murphy B."/>
            <person name="Murphy L."/>
            <person name="Muzny D.M."/>
            <person name="Nelson D.L."/>
            <person name="Nelson D.R."/>
            <person name="Nelson K.A."/>
            <person name="Nixon K."/>
            <person name="Nusskern D.R."/>
            <person name="Pacleb J.M."/>
            <person name="Palazzolo M."/>
            <person name="Pittman G.S."/>
            <person name="Pan S."/>
            <person name="Pollard J."/>
            <person name="Puri V."/>
            <person name="Reese M.G."/>
            <person name="Reinert K."/>
            <person name="Remington K."/>
            <person name="Saunders R.D.C."/>
            <person name="Scheeler F."/>
            <person name="Shen H."/>
            <person name="Shue B.C."/>
            <person name="Siden-Kiamos I."/>
            <person name="Simpson M."/>
            <person name="Skupski M.P."/>
            <person name="Smith T.J."/>
            <person name="Spier E."/>
            <person name="Spradling A.C."/>
            <person name="Stapleton M."/>
            <person name="Strong R."/>
            <person name="Sun E."/>
            <person name="Svirskas R."/>
            <person name="Tector C."/>
            <person name="Turner R."/>
            <person name="Venter E."/>
            <person name="Wang A.H."/>
            <person name="Wang X."/>
            <person name="Wang Z.-Y."/>
            <person name="Wassarman D.A."/>
            <person name="Weinstock G.M."/>
            <person name="Weissenbach J."/>
            <person name="Williams S.M."/>
            <person name="Woodage T."/>
            <person name="Worley K.C."/>
            <person name="Wu D."/>
            <person name="Yang S."/>
            <person name="Yao Q.A."/>
            <person name="Ye J."/>
            <person name="Yeh R.-F."/>
            <person name="Zaveri J.S."/>
            <person name="Zhan M."/>
            <person name="Zhang G."/>
            <person name="Zhao Q."/>
            <person name="Zheng L."/>
            <person name="Zheng X.H."/>
            <person name="Zhong F.N."/>
            <person name="Zhong W."/>
            <person name="Zhou X."/>
            <person name="Zhu S.C."/>
            <person name="Zhu X."/>
            <person name="Smith H.O."/>
            <person name="Gibbs R.A."/>
            <person name="Myers E.W."/>
            <person name="Rubin G.M."/>
            <person name="Venter J.C."/>
        </authorList>
    </citation>
    <scope>NUCLEOTIDE SEQUENCE [LARGE SCALE GENOMIC DNA]</scope>
    <source>
        <strain>Berkeley</strain>
    </source>
</reference>
<reference key="2">
    <citation type="journal article" date="2002" name="Genome Biol.">
        <title>Annotation of the Drosophila melanogaster euchromatic genome: a systematic review.</title>
        <authorList>
            <person name="Misra S."/>
            <person name="Crosby M.A."/>
            <person name="Mungall C.J."/>
            <person name="Matthews B.B."/>
            <person name="Campbell K.S."/>
            <person name="Hradecky P."/>
            <person name="Huang Y."/>
            <person name="Kaminker J.S."/>
            <person name="Millburn G.H."/>
            <person name="Prochnik S.E."/>
            <person name="Smith C.D."/>
            <person name="Tupy J.L."/>
            <person name="Whitfield E.J."/>
            <person name="Bayraktaroglu L."/>
            <person name="Berman B.P."/>
            <person name="Bettencourt B.R."/>
            <person name="Celniker S.E."/>
            <person name="de Grey A.D.N.J."/>
            <person name="Drysdale R.A."/>
            <person name="Harris N.L."/>
            <person name="Richter J."/>
            <person name="Russo S."/>
            <person name="Schroeder A.J."/>
            <person name="Shu S.Q."/>
            <person name="Stapleton M."/>
            <person name="Yamada C."/>
            <person name="Ashburner M."/>
            <person name="Gelbart W.M."/>
            <person name="Rubin G.M."/>
            <person name="Lewis S.E."/>
        </authorList>
    </citation>
    <scope>GENOME REANNOTATION</scope>
    <source>
        <strain>Berkeley</strain>
    </source>
</reference>
<reference key="3">
    <citation type="journal article" date="2002" name="Genome Biol.">
        <title>A Drosophila full-length cDNA resource.</title>
        <authorList>
            <person name="Stapleton M."/>
            <person name="Carlson J.W."/>
            <person name="Brokstein P."/>
            <person name="Yu C."/>
            <person name="Champe M."/>
            <person name="George R.A."/>
            <person name="Guarin H."/>
            <person name="Kronmiller B."/>
            <person name="Pacleb J.M."/>
            <person name="Park S."/>
            <person name="Wan K.H."/>
            <person name="Rubin G.M."/>
            <person name="Celniker S.E."/>
        </authorList>
    </citation>
    <scope>NUCLEOTIDE SEQUENCE [LARGE SCALE MRNA]</scope>
    <source>
        <strain>Berkeley</strain>
        <tissue>Embryo</tissue>
    </source>
</reference>
<reference key="4">
    <citation type="unpublished observations" date="2001-08">
        <title>Prediction of novel protein kinases from the Drosophila genome project and EST sequences.</title>
        <authorList>
            <person name="Manning G."/>
            <person name="Sudarsanam S."/>
            <person name="Plowman G."/>
        </authorList>
    </citation>
    <scope>IDENTIFICATION</scope>
</reference>
<name>WSCK_DROME</name>
<proteinExistence type="evidence at transcript level"/>